<gene>
    <name evidence="1" type="primary">rpsK</name>
    <name type="ordered locus">FTM_1504</name>
</gene>
<sequence length="129" mass="13808">MAKSVRSSKKKVKRVVTDAVAHIYSSFNNTIVTITDRQGNALSWATSGGSGFRGSRKSTPFAAQVAAERAADMALEYGVRNVDVLVKGPGSGRDSAVRALNVKNLKVTSITDVTPLPHNGCRPPKKRRV</sequence>
<accession>B2SDW2</accession>
<name>RS11_FRATM</name>
<feature type="chain" id="PRO_1000141098" description="Small ribosomal subunit protein uS11">
    <location>
        <begin position="1"/>
        <end position="129"/>
    </location>
</feature>
<proteinExistence type="inferred from homology"/>
<keyword id="KW-0687">Ribonucleoprotein</keyword>
<keyword id="KW-0689">Ribosomal protein</keyword>
<keyword id="KW-0694">RNA-binding</keyword>
<keyword id="KW-0699">rRNA-binding</keyword>
<comment type="function">
    <text evidence="1">Located on the platform of the 30S subunit, it bridges several disparate RNA helices of the 16S rRNA. Forms part of the Shine-Dalgarno cleft in the 70S ribosome.</text>
</comment>
<comment type="subunit">
    <text evidence="1">Part of the 30S ribosomal subunit. Interacts with proteins S7 and S18. Binds to IF-3.</text>
</comment>
<comment type="similarity">
    <text evidence="1">Belongs to the universal ribosomal protein uS11 family.</text>
</comment>
<dbReference type="EMBL" id="CP000915">
    <property type="protein sequence ID" value="ACD31326.1"/>
    <property type="molecule type" value="Genomic_DNA"/>
</dbReference>
<dbReference type="SMR" id="B2SDW2"/>
<dbReference type="KEGG" id="ftm:FTM_1504"/>
<dbReference type="HOGENOM" id="CLU_072439_5_0_6"/>
<dbReference type="GO" id="GO:1990904">
    <property type="term" value="C:ribonucleoprotein complex"/>
    <property type="evidence" value="ECO:0007669"/>
    <property type="project" value="UniProtKB-KW"/>
</dbReference>
<dbReference type="GO" id="GO:0005840">
    <property type="term" value="C:ribosome"/>
    <property type="evidence" value="ECO:0007669"/>
    <property type="project" value="UniProtKB-KW"/>
</dbReference>
<dbReference type="GO" id="GO:0019843">
    <property type="term" value="F:rRNA binding"/>
    <property type="evidence" value="ECO:0007669"/>
    <property type="project" value="UniProtKB-UniRule"/>
</dbReference>
<dbReference type="GO" id="GO:0003735">
    <property type="term" value="F:structural constituent of ribosome"/>
    <property type="evidence" value="ECO:0007669"/>
    <property type="project" value="InterPro"/>
</dbReference>
<dbReference type="GO" id="GO:0006412">
    <property type="term" value="P:translation"/>
    <property type="evidence" value="ECO:0007669"/>
    <property type="project" value="UniProtKB-UniRule"/>
</dbReference>
<dbReference type="FunFam" id="3.30.420.80:FF:000001">
    <property type="entry name" value="30S ribosomal protein S11"/>
    <property type="match status" value="1"/>
</dbReference>
<dbReference type="Gene3D" id="3.30.420.80">
    <property type="entry name" value="Ribosomal protein S11"/>
    <property type="match status" value="1"/>
</dbReference>
<dbReference type="HAMAP" id="MF_01310">
    <property type="entry name" value="Ribosomal_uS11"/>
    <property type="match status" value="1"/>
</dbReference>
<dbReference type="InterPro" id="IPR001971">
    <property type="entry name" value="Ribosomal_uS11"/>
</dbReference>
<dbReference type="InterPro" id="IPR019981">
    <property type="entry name" value="Ribosomal_uS11_bac-type"/>
</dbReference>
<dbReference type="InterPro" id="IPR018102">
    <property type="entry name" value="Ribosomal_uS11_CS"/>
</dbReference>
<dbReference type="InterPro" id="IPR036967">
    <property type="entry name" value="Ribosomal_uS11_sf"/>
</dbReference>
<dbReference type="NCBIfam" id="NF003698">
    <property type="entry name" value="PRK05309.1"/>
    <property type="match status" value="1"/>
</dbReference>
<dbReference type="NCBIfam" id="TIGR03632">
    <property type="entry name" value="uS11_bact"/>
    <property type="match status" value="1"/>
</dbReference>
<dbReference type="PANTHER" id="PTHR11759">
    <property type="entry name" value="40S RIBOSOMAL PROTEIN S14/30S RIBOSOMAL PROTEIN S11"/>
    <property type="match status" value="1"/>
</dbReference>
<dbReference type="Pfam" id="PF00411">
    <property type="entry name" value="Ribosomal_S11"/>
    <property type="match status" value="1"/>
</dbReference>
<dbReference type="PIRSF" id="PIRSF002131">
    <property type="entry name" value="Ribosomal_S11"/>
    <property type="match status" value="1"/>
</dbReference>
<dbReference type="SUPFAM" id="SSF53137">
    <property type="entry name" value="Translational machinery components"/>
    <property type="match status" value="1"/>
</dbReference>
<dbReference type="PROSITE" id="PS00054">
    <property type="entry name" value="RIBOSOMAL_S11"/>
    <property type="match status" value="1"/>
</dbReference>
<protein>
    <recommendedName>
        <fullName evidence="1">Small ribosomal subunit protein uS11</fullName>
    </recommendedName>
    <alternativeName>
        <fullName evidence="2">30S ribosomal protein S11</fullName>
    </alternativeName>
</protein>
<reference key="1">
    <citation type="journal article" date="2009" name="PLoS Pathog.">
        <title>Molecular evolutionary consequences of niche restriction in Francisella tularensis, a facultative intracellular pathogen.</title>
        <authorList>
            <person name="Larsson P."/>
            <person name="Elfsmark D."/>
            <person name="Svensson K."/>
            <person name="Wikstroem P."/>
            <person name="Forsman M."/>
            <person name="Brettin T."/>
            <person name="Keim P."/>
            <person name="Johansson A."/>
        </authorList>
    </citation>
    <scope>NUCLEOTIDE SEQUENCE [LARGE SCALE GENOMIC DNA]</scope>
    <source>
        <strain>FSC147</strain>
    </source>
</reference>
<evidence type="ECO:0000255" key="1">
    <source>
        <dbReference type="HAMAP-Rule" id="MF_01310"/>
    </source>
</evidence>
<evidence type="ECO:0000305" key="2"/>
<organism>
    <name type="scientific">Francisella tularensis subsp. mediasiatica (strain FSC147)</name>
    <dbReference type="NCBI Taxonomy" id="441952"/>
    <lineage>
        <taxon>Bacteria</taxon>
        <taxon>Pseudomonadati</taxon>
        <taxon>Pseudomonadota</taxon>
        <taxon>Gammaproteobacteria</taxon>
        <taxon>Thiotrichales</taxon>
        <taxon>Francisellaceae</taxon>
        <taxon>Francisella</taxon>
    </lineage>
</organism>